<sequence length="324" mass="36544">MAFKDLFKFNKGKTTFVFIGGKGGVGKTTISAATALWMARSGKKTLVISTDPAHSLSDSLEREIGHTPTKITENLYAVEIDPEVAMEEYQAKLQEQAAMNPGMGLDMLQDQMDMASMSPGIDEAAAFDQFLRYMTTDEYDIVIFDTAPTGHTLRLLSFPEIMDSWVGKMIKIRRQIGSMAKAFKNILPFMGDEEEEDRALQDMEATKKQINAAREVMSDPERTSFKMVVIPEEMSIYESERAMKALEKYSIHADGVIVNQVLPEESDCEFCNARRKLQQERLKQIREKFSDKVVAEVPLLKKEAKGIETLEKIAEQLYGEPEPE</sequence>
<comment type="function">
    <text evidence="1">Anion-transporting ATPase. Catalyzes the extrusion of arsenite (By similarity).</text>
</comment>
<comment type="catalytic activity">
    <reaction>
        <text>arsenite(in) + ATP + H2O = arsenite(out) + ADP + phosphate + H(+)</text>
        <dbReference type="Rhea" id="RHEA:11348"/>
        <dbReference type="ChEBI" id="CHEBI:15377"/>
        <dbReference type="ChEBI" id="CHEBI:15378"/>
        <dbReference type="ChEBI" id="CHEBI:29242"/>
        <dbReference type="ChEBI" id="CHEBI:30616"/>
        <dbReference type="ChEBI" id="CHEBI:43474"/>
        <dbReference type="ChEBI" id="CHEBI:456216"/>
        <dbReference type="EC" id="7.3.2.7"/>
    </reaction>
</comment>
<comment type="similarity">
    <text evidence="3">Belongs to the arsA ATPase family.</text>
</comment>
<organism>
    <name type="scientific">Methanothermobacter thermautotrophicus (strain ATCC 29096 / DSM 1053 / JCM 10044 / NBRC 100330 / Delta H)</name>
    <name type="common">Methanobacterium thermoautotrophicum</name>
    <dbReference type="NCBI Taxonomy" id="187420"/>
    <lineage>
        <taxon>Archaea</taxon>
        <taxon>Methanobacteriati</taxon>
        <taxon>Methanobacteriota</taxon>
        <taxon>Methanomada group</taxon>
        <taxon>Methanobacteria</taxon>
        <taxon>Methanobacteriales</taxon>
        <taxon>Methanobacteriaceae</taxon>
        <taxon>Methanothermobacter</taxon>
    </lineage>
</organism>
<gene>
    <name type="ordered locus">MTH_1511</name>
</gene>
<protein>
    <recommendedName>
        <fullName>Putative arsenical pump-driving ATPase</fullName>
        <ecNumber>7.3.2.7</ecNumber>
    </recommendedName>
    <alternativeName>
        <fullName>Arsenical resistance ATPase</fullName>
    </alternativeName>
    <alternativeName>
        <fullName>Arsenite-translocating ATPase</fullName>
    </alternativeName>
    <alternativeName>
        <fullName>Arsenite-transporting ATPase</fullName>
    </alternativeName>
</protein>
<evidence type="ECO:0000250" key="1"/>
<evidence type="ECO:0000255" key="2"/>
<evidence type="ECO:0000305" key="3"/>
<evidence type="ECO:0007829" key="4">
    <source>
        <dbReference type="PDB" id="3ZQ6"/>
    </source>
</evidence>
<name>ARSA_METTH</name>
<keyword id="KW-0002">3D-structure</keyword>
<keyword id="KW-0059">Arsenical resistance</keyword>
<keyword id="KW-0067">ATP-binding</keyword>
<keyword id="KW-0547">Nucleotide-binding</keyword>
<keyword id="KW-1185">Reference proteome</keyword>
<keyword id="KW-1278">Translocase</keyword>
<feature type="chain" id="PRO_0000152258" description="Putative arsenical pump-driving ATPase">
    <location>
        <begin position="1"/>
        <end position="324"/>
    </location>
</feature>
<feature type="binding site" evidence="2">
    <location>
        <begin position="21"/>
        <end position="28"/>
    </location>
    <ligand>
        <name>ATP</name>
        <dbReference type="ChEBI" id="CHEBI:30616"/>
    </ligand>
</feature>
<feature type="helix" evidence="4">
    <location>
        <begin position="3"/>
        <end position="6"/>
    </location>
</feature>
<feature type="strand" evidence="4">
    <location>
        <begin position="15"/>
        <end position="22"/>
    </location>
</feature>
<feature type="helix" evidence="4">
    <location>
        <begin position="27"/>
        <end position="40"/>
    </location>
</feature>
<feature type="strand" evidence="4">
    <location>
        <begin position="45"/>
        <end position="49"/>
    </location>
</feature>
<feature type="helix" evidence="4">
    <location>
        <begin position="56"/>
        <end position="60"/>
    </location>
</feature>
<feature type="strand" evidence="4">
    <location>
        <begin position="69"/>
        <end position="72"/>
    </location>
</feature>
<feature type="strand" evidence="4">
    <location>
        <begin position="75"/>
        <end position="79"/>
    </location>
</feature>
<feature type="helix" evidence="4">
    <location>
        <begin position="82"/>
        <end position="92"/>
    </location>
</feature>
<feature type="helix" evidence="4">
    <location>
        <begin position="107"/>
        <end position="114"/>
    </location>
</feature>
<feature type="helix" evidence="4">
    <location>
        <begin position="121"/>
        <end position="136"/>
    </location>
</feature>
<feature type="strand" evidence="4">
    <location>
        <begin position="140"/>
        <end position="145"/>
    </location>
</feature>
<feature type="helix" evidence="4">
    <location>
        <begin position="149"/>
        <end position="180"/>
    </location>
</feature>
<feature type="turn" evidence="4">
    <location>
        <begin position="181"/>
        <end position="186"/>
    </location>
</feature>
<feature type="helix" evidence="4">
    <location>
        <begin position="193"/>
        <end position="217"/>
    </location>
</feature>
<feature type="turn" evidence="4">
    <location>
        <begin position="220"/>
        <end position="222"/>
    </location>
</feature>
<feature type="strand" evidence="4">
    <location>
        <begin position="223"/>
        <end position="229"/>
    </location>
</feature>
<feature type="helix" evidence="4">
    <location>
        <begin position="233"/>
        <end position="248"/>
    </location>
</feature>
<feature type="strand" evidence="4">
    <location>
        <begin position="253"/>
        <end position="261"/>
    </location>
</feature>
<feature type="helix" evidence="4">
    <location>
        <begin position="269"/>
        <end position="288"/>
    </location>
</feature>
<feature type="turn" evidence="4">
    <location>
        <begin position="289"/>
        <end position="291"/>
    </location>
</feature>
<feature type="strand" evidence="4">
    <location>
        <begin position="292"/>
        <end position="298"/>
    </location>
</feature>
<feature type="helix" evidence="4">
    <location>
        <begin position="307"/>
        <end position="318"/>
    </location>
</feature>
<reference key="1">
    <citation type="journal article" date="1997" name="J. Bacteriol.">
        <title>Complete genome sequence of Methanobacterium thermoautotrophicum deltaH: functional analysis and comparative genomics.</title>
        <authorList>
            <person name="Smith D.R."/>
            <person name="Doucette-Stamm L.A."/>
            <person name="Deloughery C."/>
            <person name="Lee H.-M."/>
            <person name="Dubois J."/>
            <person name="Aldredge T."/>
            <person name="Bashirzadeh R."/>
            <person name="Blakely D."/>
            <person name="Cook R."/>
            <person name="Gilbert K."/>
            <person name="Harrison D."/>
            <person name="Hoang L."/>
            <person name="Keagle P."/>
            <person name="Lumm W."/>
            <person name="Pothier B."/>
            <person name="Qiu D."/>
            <person name="Spadafora R."/>
            <person name="Vicare R."/>
            <person name="Wang Y."/>
            <person name="Wierzbowski J."/>
            <person name="Gibson R."/>
            <person name="Jiwani N."/>
            <person name="Caruso A."/>
            <person name="Bush D."/>
            <person name="Safer H."/>
            <person name="Patwell D."/>
            <person name="Prabhakar S."/>
            <person name="McDougall S."/>
            <person name="Shimer G."/>
            <person name="Goyal A."/>
            <person name="Pietrovski S."/>
            <person name="Church G.M."/>
            <person name="Daniels C.J."/>
            <person name="Mao J.-I."/>
            <person name="Rice P."/>
            <person name="Noelling J."/>
            <person name="Reeve J.N."/>
        </authorList>
    </citation>
    <scope>NUCLEOTIDE SEQUENCE [LARGE SCALE GENOMIC DNA]</scope>
    <source>
        <strain>ATCC 29096 / DSM 1053 / JCM 10044 / NBRC 100330 / Delta H</strain>
    </source>
</reference>
<proteinExistence type="evidence at protein level"/>
<dbReference type="EC" id="7.3.2.7"/>
<dbReference type="EMBL" id="AE000666">
    <property type="protein sequence ID" value="AAB85986.1"/>
    <property type="molecule type" value="Genomic_DNA"/>
</dbReference>
<dbReference type="PIR" id="F69068">
    <property type="entry name" value="F69068"/>
</dbReference>
<dbReference type="RefSeq" id="WP_010877121.1">
    <property type="nucleotide sequence ID" value="NC_000916.1"/>
</dbReference>
<dbReference type="PDB" id="3ZQ6">
    <property type="method" value="X-ray"/>
    <property type="resolution" value="2.11 A"/>
    <property type="chains" value="A/B/C/D=1-324"/>
</dbReference>
<dbReference type="PDBsum" id="3ZQ6"/>
<dbReference type="SMR" id="O27555"/>
<dbReference type="FunCoup" id="O27555">
    <property type="interactions" value="180"/>
</dbReference>
<dbReference type="STRING" id="187420.MTH_1511"/>
<dbReference type="PaxDb" id="187420-MTH_1511"/>
<dbReference type="EnsemblBacteria" id="AAB85986">
    <property type="protein sequence ID" value="AAB85986"/>
    <property type="gene ID" value="MTH_1511"/>
</dbReference>
<dbReference type="KEGG" id="mth:MTH_1511"/>
<dbReference type="PATRIC" id="fig|187420.15.peg.1474"/>
<dbReference type="HOGENOM" id="CLU_040761_4_0_2"/>
<dbReference type="InParanoid" id="O27555"/>
<dbReference type="EvolutionaryTrace" id="O27555"/>
<dbReference type="Proteomes" id="UP000005223">
    <property type="component" value="Chromosome"/>
</dbReference>
<dbReference type="GO" id="GO:0005524">
    <property type="term" value="F:ATP binding"/>
    <property type="evidence" value="ECO:0007669"/>
    <property type="project" value="UniProtKB-KW"/>
</dbReference>
<dbReference type="GO" id="GO:0016887">
    <property type="term" value="F:ATP hydrolysis activity"/>
    <property type="evidence" value="ECO:0007669"/>
    <property type="project" value="InterPro"/>
</dbReference>
<dbReference type="GO" id="GO:0015446">
    <property type="term" value="F:ATPase-coupled arsenite transmembrane transporter activity"/>
    <property type="evidence" value="ECO:0007669"/>
    <property type="project" value="UniProtKB-EC"/>
</dbReference>
<dbReference type="CDD" id="cd02035">
    <property type="entry name" value="ArsA"/>
    <property type="match status" value="1"/>
</dbReference>
<dbReference type="FunFam" id="3.40.50.300:FF:001801">
    <property type="entry name" value="Putative arsenical pump-driving ATPase"/>
    <property type="match status" value="1"/>
</dbReference>
<dbReference type="Gene3D" id="3.40.50.300">
    <property type="entry name" value="P-loop containing nucleotide triphosphate hydrolases"/>
    <property type="match status" value="1"/>
</dbReference>
<dbReference type="InterPro" id="IPR025723">
    <property type="entry name" value="Anion-transp_ATPase-like_dom"/>
</dbReference>
<dbReference type="InterPro" id="IPR016300">
    <property type="entry name" value="ATPase_ArsA/GET3"/>
</dbReference>
<dbReference type="InterPro" id="IPR027417">
    <property type="entry name" value="P-loop_NTPase"/>
</dbReference>
<dbReference type="NCBIfam" id="TIGR00345">
    <property type="entry name" value="GET3_arsA_TRC40"/>
    <property type="match status" value="1"/>
</dbReference>
<dbReference type="PANTHER" id="PTHR10803">
    <property type="entry name" value="ARSENICAL PUMP-DRIVING ATPASE ARSENITE-TRANSLOCATING ATPASE"/>
    <property type="match status" value="1"/>
</dbReference>
<dbReference type="PANTHER" id="PTHR10803:SF3">
    <property type="entry name" value="ATPASE GET3"/>
    <property type="match status" value="1"/>
</dbReference>
<dbReference type="Pfam" id="PF02374">
    <property type="entry name" value="ArsA_ATPase"/>
    <property type="match status" value="1"/>
</dbReference>
<dbReference type="SUPFAM" id="SSF52540">
    <property type="entry name" value="P-loop containing nucleoside triphosphate hydrolases"/>
    <property type="match status" value="1"/>
</dbReference>
<accession>O27555</accession>